<gene>
    <name evidence="1" type="primary">smpB</name>
    <name type="ordered locus">Pnuc_1426</name>
</gene>
<accession>A4SYS6</accession>
<name>SSRP_POLAQ</name>
<protein>
    <recommendedName>
        <fullName evidence="1">SsrA-binding protein</fullName>
    </recommendedName>
    <alternativeName>
        <fullName evidence="1">Small protein B</fullName>
    </alternativeName>
</protein>
<reference key="1">
    <citation type="journal article" date="2012" name="Stand. Genomic Sci.">
        <title>Complete genome sequence of Polynucleobacter necessarius subsp. asymbioticus type strain (QLW-P1DMWA-1(T)).</title>
        <authorList>
            <person name="Meincke L."/>
            <person name="Copeland A."/>
            <person name="Lapidus A."/>
            <person name="Lucas S."/>
            <person name="Berry K.W."/>
            <person name="Del Rio T.G."/>
            <person name="Hammon N."/>
            <person name="Dalin E."/>
            <person name="Tice H."/>
            <person name="Pitluck S."/>
            <person name="Richardson P."/>
            <person name="Bruce D."/>
            <person name="Goodwin L."/>
            <person name="Han C."/>
            <person name="Tapia R."/>
            <person name="Detter J.C."/>
            <person name="Schmutz J."/>
            <person name="Brettin T."/>
            <person name="Larimer F."/>
            <person name="Land M."/>
            <person name="Hauser L."/>
            <person name="Kyrpides N.C."/>
            <person name="Ivanova N."/>
            <person name="Goker M."/>
            <person name="Woyke T."/>
            <person name="Wu Q.L."/>
            <person name="Pockl M."/>
            <person name="Hahn M.W."/>
            <person name="Klenk H.P."/>
        </authorList>
    </citation>
    <scope>NUCLEOTIDE SEQUENCE [LARGE SCALE GENOMIC DNA]</scope>
    <source>
        <strain>DSM 18221 / CIP 109841 / QLW-P1DMWA-1</strain>
    </source>
</reference>
<keyword id="KW-0963">Cytoplasm</keyword>
<keyword id="KW-1185">Reference proteome</keyword>
<keyword id="KW-0694">RNA-binding</keyword>
<organism>
    <name type="scientific">Polynucleobacter asymbioticus (strain DSM 18221 / CIP 109841 / QLW-P1DMWA-1)</name>
    <name type="common">Polynucleobacter necessarius subsp. asymbioticus</name>
    <dbReference type="NCBI Taxonomy" id="312153"/>
    <lineage>
        <taxon>Bacteria</taxon>
        <taxon>Pseudomonadati</taxon>
        <taxon>Pseudomonadota</taxon>
        <taxon>Betaproteobacteria</taxon>
        <taxon>Burkholderiales</taxon>
        <taxon>Burkholderiaceae</taxon>
        <taxon>Polynucleobacter</taxon>
    </lineage>
</organism>
<proteinExistence type="inferred from homology"/>
<dbReference type="EMBL" id="CP000655">
    <property type="protein sequence ID" value="ABP34640.1"/>
    <property type="molecule type" value="Genomic_DNA"/>
</dbReference>
<dbReference type="RefSeq" id="WP_011903265.1">
    <property type="nucleotide sequence ID" value="NC_009379.1"/>
</dbReference>
<dbReference type="SMR" id="A4SYS6"/>
<dbReference type="GeneID" id="31481818"/>
<dbReference type="KEGG" id="pnu:Pnuc_1426"/>
<dbReference type="eggNOG" id="COG0691">
    <property type="taxonomic scope" value="Bacteria"/>
</dbReference>
<dbReference type="HOGENOM" id="CLU_108953_3_0_4"/>
<dbReference type="Proteomes" id="UP000000231">
    <property type="component" value="Chromosome"/>
</dbReference>
<dbReference type="GO" id="GO:0005829">
    <property type="term" value="C:cytosol"/>
    <property type="evidence" value="ECO:0007669"/>
    <property type="project" value="TreeGrafter"/>
</dbReference>
<dbReference type="GO" id="GO:0003723">
    <property type="term" value="F:RNA binding"/>
    <property type="evidence" value="ECO:0007669"/>
    <property type="project" value="UniProtKB-UniRule"/>
</dbReference>
<dbReference type="GO" id="GO:0070929">
    <property type="term" value="P:trans-translation"/>
    <property type="evidence" value="ECO:0007669"/>
    <property type="project" value="UniProtKB-UniRule"/>
</dbReference>
<dbReference type="CDD" id="cd09294">
    <property type="entry name" value="SmpB"/>
    <property type="match status" value="1"/>
</dbReference>
<dbReference type="Gene3D" id="2.40.280.10">
    <property type="match status" value="1"/>
</dbReference>
<dbReference type="HAMAP" id="MF_00023">
    <property type="entry name" value="SmpB"/>
    <property type="match status" value="1"/>
</dbReference>
<dbReference type="InterPro" id="IPR023620">
    <property type="entry name" value="SmpB"/>
</dbReference>
<dbReference type="InterPro" id="IPR000037">
    <property type="entry name" value="SsrA-bd_prot"/>
</dbReference>
<dbReference type="InterPro" id="IPR020081">
    <property type="entry name" value="SsrA-bd_prot_CS"/>
</dbReference>
<dbReference type="NCBIfam" id="NF003843">
    <property type="entry name" value="PRK05422.1"/>
    <property type="match status" value="1"/>
</dbReference>
<dbReference type="NCBIfam" id="TIGR00086">
    <property type="entry name" value="smpB"/>
    <property type="match status" value="1"/>
</dbReference>
<dbReference type="PANTHER" id="PTHR30308:SF2">
    <property type="entry name" value="SSRA-BINDING PROTEIN"/>
    <property type="match status" value="1"/>
</dbReference>
<dbReference type="PANTHER" id="PTHR30308">
    <property type="entry name" value="TMRNA-BINDING COMPONENT OF TRANS-TRANSLATION TAGGING COMPLEX"/>
    <property type="match status" value="1"/>
</dbReference>
<dbReference type="Pfam" id="PF01668">
    <property type="entry name" value="SmpB"/>
    <property type="match status" value="1"/>
</dbReference>
<dbReference type="SUPFAM" id="SSF74982">
    <property type="entry name" value="Small protein B (SmpB)"/>
    <property type="match status" value="1"/>
</dbReference>
<dbReference type="PROSITE" id="PS01317">
    <property type="entry name" value="SSRP"/>
    <property type="match status" value="1"/>
</dbReference>
<comment type="function">
    <text evidence="1">Required for rescue of stalled ribosomes mediated by trans-translation. Binds to transfer-messenger RNA (tmRNA), required for stable association of tmRNA with ribosomes. tmRNA and SmpB together mimic tRNA shape, replacing the anticodon stem-loop with SmpB. tmRNA is encoded by the ssrA gene; the 2 termini fold to resemble tRNA(Ala) and it encodes a 'tag peptide', a short internal open reading frame. During trans-translation Ala-aminoacylated tmRNA acts like a tRNA, entering the A-site of stalled ribosomes, displacing the stalled mRNA. The ribosome then switches to translate the ORF on the tmRNA; the nascent peptide is terminated with the 'tag peptide' encoded by the tmRNA and targeted for degradation. The ribosome is freed to recommence translation, which seems to be the essential function of trans-translation.</text>
</comment>
<comment type="subcellular location">
    <subcellularLocation>
        <location evidence="1">Cytoplasm</location>
    </subcellularLocation>
    <text evidence="1">The tmRNA-SmpB complex associates with stalled 70S ribosomes.</text>
</comment>
<comment type="similarity">
    <text evidence="1">Belongs to the SmpB family.</text>
</comment>
<sequence length="150" mass="17064">MSIVDNKKAFFDYFIEERFEAGLVLEGWEVKAIRAGRVHVKEAYVVIRKAELFLIGCHITPLLSASTHIVPDSTRTRKLLLNAIEIRKLIGKVEQKGYTLVPLNLHFTKGNVKCEIGLARGKKQHDKRAATKEREWEVQKGRIARGDLNA</sequence>
<evidence type="ECO:0000255" key="1">
    <source>
        <dbReference type="HAMAP-Rule" id="MF_00023"/>
    </source>
</evidence>
<feature type="chain" id="PRO_1000074360" description="SsrA-binding protein">
    <location>
        <begin position="1"/>
        <end position="150"/>
    </location>
</feature>